<reference key="1">
    <citation type="journal article" date="2003" name="Nucleic Acids Res.">
        <title>What's in the genome of a filamentous fungus? Analysis of the Neurospora genome sequence.</title>
        <authorList>
            <person name="Mannhaupt G."/>
            <person name="Montrone C."/>
            <person name="Haase D."/>
            <person name="Mewes H.-W."/>
            <person name="Aign V."/>
            <person name="Hoheisel J.D."/>
            <person name="Fartmann B."/>
            <person name="Nyakatura G."/>
            <person name="Kempken F."/>
            <person name="Maier J."/>
            <person name="Schulte U."/>
        </authorList>
    </citation>
    <scope>NUCLEOTIDE SEQUENCE [LARGE SCALE GENOMIC DNA]</scope>
    <source>
        <strain>ATCC 24698 / 74-OR23-1A / CBS 708.71 / DSM 1257 / FGSC 987</strain>
    </source>
</reference>
<reference key="2">
    <citation type="journal article" date="2003" name="Nature">
        <title>The genome sequence of the filamentous fungus Neurospora crassa.</title>
        <authorList>
            <person name="Galagan J.E."/>
            <person name="Calvo S.E."/>
            <person name="Borkovich K.A."/>
            <person name="Selker E.U."/>
            <person name="Read N.D."/>
            <person name="Jaffe D.B."/>
            <person name="FitzHugh W."/>
            <person name="Ma L.-J."/>
            <person name="Smirnov S."/>
            <person name="Purcell S."/>
            <person name="Rehman B."/>
            <person name="Elkins T."/>
            <person name="Engels R."/>
            <person name="Wang S."/>
            <person name="Nielsen C.B."/>
            <person name="Butler J."/>
            <person name="Endrizzi M."/>
            <person name="Qui D."/>
            <person name="Ianakiev P."/>
            <person name="Bell-Pedersen D."/>
            <person name="Nelson M.A."/>
            <person name="Werner-Washburne M."/>
            <person name="Selitrennikoff C.P."/>
            <person name="Kinsey J.A."/>
            <person name="Braun E.L."/>
            <person name="Zelter A."/>
            <person name="Schulte U."/>
            <person name="Kothe G.O."/>
            <person name="Jedd G."/>
            <person name="Mewes H.-W."/>
            <person name="Staben C."/>
            <person name="Marcotte E."/>
            <person name="Greenberg D."/>
            <person name="Roy A."/>
            <person name="Foley K."/>
            <person name="Naylor J."/>
            <person name="Stange-Thomann N."/>
            <person name="Barrett R."/>
            <person name="Gnerre S."/>
            <person name="Kamal M."/>
            <person name="Kamvysselis M."/>
            <person name="Mauceli E.W."/>
            <person name="Bielke C."/>
            <person name="Rudd S."/>
            <person name="Frishman D."/>
            <person name="Krystofova S."/>
            <person name="Rasmussen C."/>
            <person name="Metzenberg R.L."/>
            <person name="Perkins D.D."/>
            <person name="Kroken S."/>
            <person name="Cogoni C."/>
            <person name="Macino G."/>
            <person name="Catcheside D.E.A."/>
            <person name="Li W."/>
            <person name="Pratt R.J."/>
            <person name="Osmani S.A."/>
            <person name="DeSouza C.P.C."/>
            <person name="Glass N.L."/>
            <person name="Orbach M.J."/>
            <person name="Berglund J.A."/>
            <person name="Voelker R."/>
            <person name="Yarden O."/>
            <person name="Plamann M."/>
            <person name="Seiler S."/>
            <person name="Dunlap J.C."/>
            <person name="Radford A."/>
            <person name="Aramayo R."/>
            <person name="Natvig D.O."/>
            <person name="Alex L.A."/>
            <person name="Mannhaupt G."/>
            <person name="Ebbole D.J."/>
            <person name="Freitag M."/>
            <person name="Paulsen I."/>
            <person name="Sachs M.S."/>
            <person name="Lander E.S."/>
            <person name="Nusbaum C."/>
            <person name="Birren B.W."/>
        </authorList>
    </citation>
    <scope>NUCLEOTIDE SEQUENCE [LARGE SCALE GENOMIC DNA]</scope>
    <source>
        <strain>ATCC 24698 / 74-OR23-1A / CBS 708.71 / DSM 1257 / FGSC 987</strain>
    </source>
</reference>
<organism>
    <name type="scientific">Neurospora crassa (strain ATCC 24698 / 74-OR23-1A / CBS 708.71 / DSM 1257 / FGSC 987)</name>
    <dbReference type="NCBI Taxonomy" id="367110"/>
    <lineage>
        <taxon>Eukaryota</taxon>
        <taxon>Fungi</taxon>
        <taxon>Dikarya</taxon>
        <taxon>Ascomycota</taxon>
        <taxon>Pezizomycotina</taxon>
        <taxon>Sordariomycetes</taxon>
        <taxon>Sordariomycetidae</taxon>
        <taxon>Sordariales</taxon>
        <taxon>Sordariaceae</taxon>
        <taxon>Neurospora</taxon>
    </lineage>
</organism>
<name>MED31_NEUCR</name>
<feature type="chain" id="PRO_0000305728" description="Mediator of RNA polymerase II transcription subunit 31">
    <location>
        <begin position="1"/>
        <end position="134"/>
    </location>
</feature>
<feature type="region of interest" description="Disordered" evidence="2">
    <location>
        <begin position="1"/>
        <end position="28"/>
    </location>
</feature>
<feature type="compositionally biased region" description="Polar residues" evidence="2">
    <location>
        <begin position="1"/>
        <end position="12"/>
    </location>
</feature>
<dbReference type="EMBL" id="BX842641">
    <property type="protein sequence ID" value="CAE76625.1"/>
    <property type="status" value="ALT_SEQ"/>
    <property type="molecule type" value="Genomic_DNA"/>
</dbReference>
<dbReference type="EMBL" id="CM002236">
    <property type="protein sequence ID" value="EAA35494.3"/>
    <property type="molecule type" value="Genomic_DNA"/>
</dbReference>
<dbReference type="RefSeq" id="XP_964730.3">
    <property type="nucleotide sequence ID" value="XM_959637.3"/>
</dbReference>
<dbReference type="SMR" id="Q7SF81"/>
<dbReference type="STRING" id="367110.Q7SF81"/>
<dbReference type="PaxDb" id="5141-EFNCRP00000000761"/>
<dbReference type="EnsemblFungi" id="EAA35494">
    <property type="protein sequence ID" value="EAA35494"/>
    <property type="gene ID" value="NCU00569"/>
</dbReference>
<dbReference type="GeneID" id="3880879"/>
<dbReference type="KEGG" id="ncr:NCU00569"/>
<dbReference type="VEuPathDB" id="FungiDB:NCU00569"/>
<dbReference type="HOGENOM" id="CLU_071681_4_1_1"/>
<dbReference type="InParanoid" id="Q7SF81"/>
<dbReference type="OrthoDB" id="10257739at2759"/>
<dbReference type="Proteomes" id="UP000001805">
    <property type="component" value="Chromosome 1, Linkage Group I"/>
</dbReference>
<dbReference type="GO" id="GO:0070847">
    <property type="term" value="C:core mediator complex"/>
    <property type="evidence" value="ECO:0000318"/>
    <property type="project" value="GO_Central"/>
</dbReference>
<dbReference type="GO" id="GO:0016592">
    <property type="term" value="C:mediator complex"/>
    <property type="evidence" value="ECO:0000318"/>
    <property type="project" value="GO_Central"/>
</dbReference>
<dbReference type="GO" id="GO:0003712">
    <property type="term" value="F:transcription coregulator activity"/>
    <property type="evidence" value="ECO:0007669"/>
    <property type="project" value="InterPro"/>
</dbReference>
<dbReference type="GO" id="GO:0006357">
    <property type="term" value="P:regulation of transcription by RNA polymerase II"/>
    <property type="evidence" value="ECO:0000318"/>
    <property type="project" value="GO_Central"/>
</dbReference>
<dbReference type="FunFam" id="1.10.10.1340:FF:000002">
    <property type="entry name" value="Mediator of RNA polymerase II transcription subunit 31"/>
    <property type="match status" value="1"/>
</dbReference>
<dbReference type="Gene3D" id="1.10.10.1340">
    <property type="entry name" value="Mediator of RNA polymerase II, submodule Med31 (Soh1)"/>
    <property type="match status" value="1"/>
</dbReference>
<dbReference type="InterPro" id="IPR038089">
    <property type="entry name" value="Med31_sf"/>
</dbReference>
<dbReference type="InterPro" id="IPR008831">
    <property type="entry name" value="Mediator_Med31"/>
</dbReference>
<dbReference type="PANTHER" id="PTHR13186">
    <property type="entry name" value="MEDIATOR OF RNA POLYMERASE II TRANSCRIPTION SUBUNIT 31"/>
    <property type="match status" value="1"/>
</dbReference>
<dbReference type="Pfam" id="PF05669">
    <property type="entry name" value="Med31"/>
    <property type="match status" value="1"/>
</dbReference>
<comment type="function">
    <text evidence="1">Component of the Mediator complex, a coactivator involved in the regulated transcription of nearly all RNA polymerase II-dependent genes. Mediator functions as a bridge to convey information from gene-specific regulatory proteins to the basal RNA polymerase II transcription machinery. Mediator is recruited to promoters by direct interactions with regulatory proteins and serves as a scaffold for the assembly of a functional preinitiation complex with RNA polymerase II and the general transcription factors (By similarity).</text>
</comment>
<comment type="subunit">
    <text evidence="1">Component of the Mediator complex.</text>
</comment>
<comment type="subcellular location">
    <subcellularLocation>
        <location evidence="1">Nucleus</location>
    </subcellularLocation>
</comment>
<comment type="similarity">
    <text evidence="3">Belongs to the Mediator complex subunit 31 family.</text>
</comment>
<comment type="caution">
    <text evidence="3">It is uncertain whether Met-1 or Met-6 is the initiator.</text>
</comment>
<comment type="sequence caution" evidence="3">
    <conflict type="erroneous gene model prediction">
        <sequence resource="EMBL-CDS" id="CAE76625"/>
    </conflict>
</comment>
<protein>
    <recommendedName>
        <fullName>Mediator of RNA polymerase II transcription subunit 31</fullName>
    </recommendedName>
    <alternativeName>
        <fullName>Mediator complex subunit 31</fullName>
    </alternativeName>
</protein>
<proteinExistence type="inferred from homology"/>
<gene>
    <name type="primary">soh1</name>
    <name type="synonym">med31</name>
    <name type="ORF">B22I21.390</name>
    <name type="ORF">NCU00569</name>
</gene>
<evidence type="ECO:0000250" key="1"/>
<evidence type="ECO:0000256" key="2">
    <source>
        <dbReference type="SAM" id="MobiDB-lite"/>
    </source>
</evidence>
<evidence type="ECO:0000305" key="3"/>
<accession>Q7SF81</accession>
<accession>Q6MUM8</accession>
<keyword id="KW-0010">Activator</keyword>
<keyword id="KW-0539">Nucleus</keyword>
<keyword id="KW-1185">Reference proteome</keyword>
<keyword id="KW-0804">Transcription</keyword>
<keyword id="KW-0805">Transcription regulation</keyword>
<sequence length="134" mass="15263">MASDPMSVNSSAREPPAPPGSGADEPKYGGYTRFELELEFVQALGNPLYLNHLASRKLLSNPAFIAYLDYLQYWSRPPYLKYITYPGPTLKNLELLQQEKFRQDIISPDLVERLRLEGMKAGIDWHRESFPSTA</sequence>